<accession>Q8ZH58</accession>
<accession>Q0WHZ3</accession>
<accession>Q74S49</accession>
<accession>Q7CH17</accession>
<dbReference type="EMBL" id="AL590842">
    <property type="protein sequence ID" value="CAL19717.1"/>
    <property type="molecule type" value="Genomic_DNA"/>
</dbReference>
<dbReference type="EMBL" id="AE009952">
    <property type="protein sequence ID" value="AAM86677.1"/>
    <property type="molecule type" value="Genomic_DNA"/>
</dbReference>
<dbReference type="EMBL" id="AE017042">
    <property type="protein sequence ID" value="AAS62982.1"/>
    <property type="molecule type" value="Genomic_DNA"/>
</dbReference>
<dbReference type="PIR" id="AC0129">
    <property type="entry name" value="AC0129"/>
</dbReference>
<dbReference type="RefSeq" id="WP_002212139.1">
    <property type="nucleotide sequence ID" value="NZ_WUCM01000044.1"/>
</dbReference>
<dbReference type="RefSeq" id="YP_002346095.1">
    <property type="nucleotide sequence ID" value="NC_003143.1"/>
</dbReference>
<dbReference type="SMR" id="Q8ZH58"/>
<dbReference type="IntAct" id="Q8ZH58">
    <property type="interactions" value="1"/>
</dbReference>
<dbReference type="STRING" id="214092.YPO1052"/>
<dbReference type="PaxDb" id="214092-YPO1052"/>
<dbReference type="DNASU" id="1148074"/>
<dbReference type="EnsemblBacteria" id="AAS62982">
    <property type="protein sequence ID" value="AAS62982"/>
    <property type="gene ID" value="YP_2798"/>
</dbReference>
<dbReference type="GeneID" id="57977509"/>
<dbReference type="KEGG" id="ype:YPO1052"/>
<dbReference type="KEGG" id="ypk:y3127"/>
<dbReference type="KEGG" id="ypm:YP_2798"/>
<dbReference type="PATRIC" id="fig|214092.21.peg.1340"/>
<dbReference type="eggNOG" id="COG4775">
    <property type="taxonomic scope" value="Bacteria"/>
</dbReference>
<dbReference type="HOGENOM" id="CLU_007664_1_0_6"/>
<dbReference type="OMA" id="TNPRIFD"/>
<dbReference type="OrthoDB" id="9803054at2"/>
<dbReference type="Proteomes" id="UP000000815">
    <property type="component" value="Chromosome"/>
</dbReference>
<dbReference type="Proteomes" id="UP000001019">
    <property type="component" value="Chromosome"/>
</dbReference>
<dbReference type="Proteomes" id="UP000002490">
    <property type="component" value="Chromosome"/>
</dbReference>
<dbReference type="GO" id="GO:1990063">
    <property type="term" value="C:Bam protein complex"/>
    <property type="evidence" value="ECO:0000318"/>
    <property type="project" value="GO_Central"/>
</dbReference>
<dbReference type="GO" id="GO:0043165">
    <property type="term" value="P:Gram-negative-bacterium-type cell outer membrane assembly"/>
    <property type="evidence" value="ECO:0000318"/>
    <property type="project" value="GO_Central"/>
</dbReference>
<dbReference type="GO" id="GO:0051205">
    <property type="term" value="P:protein insertion into membrane"/>
    <property type="evidence" value="ECO:0000318"/>
    <property type="project" value="GO_Central"/>
</dbReference>
<dbReference type="FunFam" id="2.40.160.50:FF:000001">
    <property type="entry name" value="Outer membrane protein assembly factor BamA"/>
    <property type="match status" value="1"/>
</dbReference>
<dbReference type="FunFam" id="3.10.20.310:FF:000001">
    <property type="entry name" value="Outer membrane protein assembly factor BamA"/>
    <property type="match status" value="1"/>
</dbReference>
<dbReference type="FunFam" id="3.10.20.310:FF:000002">
    <property type="entry name" value="Outer membrane protein assembly factor BamA"/>
    <property type="match status" value="1"/>
</dbReference>
<dbReference type="FunFam" id="3.10.20.310:FF:000003">
    <property type="entry name" value="Outer membrane protein assembly factor BamA"/>
    <property type="match status" value="1"/>
</dbReference>
<dbReference type="FunFam" id="3.10.20.310:FF:000004">
    <property type="entry name" value="Outer membrane protein assembly factor BamA"/>
    <property type="match status" value="1"/>
</dbReference>
<dbReference type="FunFam" id="3.10.20.310:FF:000005">
    <property type="entry name" value="Outer membrane protein assembly factor BamA"/>
    <property type="match status" value="1"/>
</dbReference>
<dbReference type="Gene3D" id="3.10.20.310">
    <property type="entry name" value="membrane protein fhac"/>
    <property type="match status" value="5"/>
</dbReference>
<dbReference type="Gene3D" id="2.40.160.50">
    <property type="entry name" value="membrane protein fhac: a member of the omp85/tpsb transporter family"/>
    <property type="match status" value="1"/>
</dbReference>
<dbReference type="HAMAP" id="MF_01430">
    <property type="entry name" value="OM_assembly_BamA"/>
    <property type="match status" value="1"/>
</dbReference>
<dbReference type="InterPro" id="IPR000184">
    <property type="entry name" value="Bac_surfAg_D15"/>
</dbReference>
<dbReference type="InterPro" id="IPR010827">
    <property type="entry name" value="BamA/TamA_POTRA"/>
</dbReference>
<dbReference type="InterPro" id="IPR039910">
    <property type="entry name" value="D15-like"/>
</dbReference>
<dbReference type="InterPro" id="IPR023707">
    <property type="entry name" value="OM_assembly_BamA"/>
</dbReference>
<dbReference type="InterPro" id="IPR034746">
    <property type="entry name" value="POTRA"/>
</dbReference>
<dbReference type="NCBIfam" id="TIGR03303">
    <property type="entry name" value="OM_YaeT"/>
    <property type="match status" value="1"/>
</dbReference>
<dbReference type="NCBIfam" id="NF008287">
    <property type="entry name" value="PRK11067.1"/>
    <property type="match status" value="1"/>
</dbReference>
<dbReference type="PANTHER" id="PTHR12815:SF23">
    <property type="entry name" value="OUTER MEMBRANE PROTEIN ASSEMBLY FACTOR BAMA"/>
    <property type="match status" value="1"/>
</dbReference>
<dbReference type="PANTHER" id="PTHR12815">
    <property type="entry name" value="SORTING AND ASSEMBLY MACHINERY SAMM50 PROTEIN FAMILY MEMBER"/>
    <property type="match status" value="1"/>
</dbReference>
<dbReference type="Pfam" id="PF01103">
    <property type="entry name" value="Omp85"/>
    <property type="match status" value="1"/>
</dbReference>
<dbReference type="Pfam" id="PF07244">
    <property type="entry name" value="POTRA"/>
    <property type="match status" value="4"/>
</dbReference>
<dbReference type="PIRSF" id="PIRSF006076">
    <property type="entry name" value="OM_assembly_OMP85"/>
    <property type="match status" value="1"/>
</dbReference>
<dbReference type="PROSITE" id="PS51779">
    <property type="entry name" value="POTRA"/>
    <property type="match status" value="5"/>
</dbReference>
<evidence type="ECO:0000255" key="1">
    <source>
        <dbReference type="HAMAP-Rule" id="MF_01430"/>
    </source>
</evidence>
<evidence type="ECO:0000255" key="2">
    <source>
        <dbReference type="PROSITE-ProRule" id="PRU01115"/>
    </source>
</evidence>
<keyword id="KW-0998">Cell outer membrane</keyword>
<keyword id="KW-0472">Membrane</keyword>
<keyword id="KW-1185">Reference proteome</keyword>
<keyword id="KW-0677">Repeat</keyword>
<keyword id="KW-0732">Signal</keyword>
<keyword id="KW-0812">Transmembrane</keyword>
<keyword id="KW-1134">Transmembrane beta strand</keyword>
<name>BAMA_YERPE</name>
<protein>
    <recommendedName>
        <fullName evidence="1">Outer membrane protein assembly factor BamA</fullName>
    </recommendedName>
</protein>
<reference key="1">
    <citation type="journal article" date="2001" name="Nature">
        <title>Genome sequence of Yersinia pestis, the causative agent of plague.</title>
        <authorList>
            <person name="Parkhill J."/>
            <person name="Wren B.W."/>
            <person name="Thomson N.R."/>
            <person name="Titball R.W."/>
            <person name="Holden M.T.G."/>
            <person name="Prentice M.B."/>
            <person name="Sebaihia M."/>
            <person name="James K.D."/>
            <person name="Churcher C.M."/>
            <person name="Mungall K.L."/>
            <person name="Baker S."/>
            <person name="Basham D."/>
            <person name="Bentley S.D."/>
            <person name="Brooks K."/>
            <person name="Cerdeno-Tarraga A.-M."/>
            <person name="Chillingworth T."/>
            <person name="Cronin A."/>
            <person name="Davies R.M."/>
            <person name="Davis P."/>
            <person name="Dougan G."/>
            <person name="Feltwell T."/>
            <person name="Hamlin N."/>
            <person name="Holroyd S."/>
            <person name="Jagels K."/>
            <person name="Karlyshev A.V."/>
            <person name="Leather S."/>
            <person name="Moule S."/>
            <person name="Oyston P.C.F."/>
            <person name="Quail M.A."/>
            <person name="Rutherford K.M."/>
            <person name="Simmonds M."/>
            <person name="Skelton J."/>
            <person name="Stevens K."/>
            <person name="Whitehead S."/>
            <person name="Barrell B.G."/>
        </authorList>
    </citation>
    <scope>NUCLEOTIDE SEQUENCE [LARGE SCALE GENOMIC DNA]</scope>
    <source>
        <strain>CO-92 / Biovar Orientalis</strain>
    </source>
</reference>
<reference key="2">
    <citation type="journal article" date="2002" name="J. Bacteriol.">
        <title>Genome sequence of Yersinia pestis KIM.</title>
        <authorList>
            <person name="Deng W."/>
            <person name="Burland V."/>
            <person name="Plunkett G. III"/>
            <person name="Boutin A."/>
            <person name="Mayhew G.F."/>
            <person name="Liss P."/>
            <person name="Perna N.T."/>
            <person name="Rose D.J."/>
            <person name="Mau B."/>
            <person name="Zhou S."/>
            <person name="Schwartz D.C."/>
            <person name="Fetherston J.D."/>
            <person name="Lindler L.E."/>
            <person name="Brubaker R.R."/>
            <person name="Plano G.V."/>
            <person name="Straley S.C."/>
            <person name="McDonough K.A."/>
            <person name="Nilles M.L."/>
            <person name="Matson J.S."/>
            <person name="Blattner F.R."/>
            <person name="Perry R.D."/>
        </authorList>
    </citation>
    <scope>NUCLEOTIDE SEQUENCE [LARGE SCALE GENOMIC DNA]</scope>
    <source>
        <strain>KIM10+ / Biovar Mediaevalis</strain>
    </source>
</reference>
<reference key="3">
    <citation type="journal article" date="2004" name="DNA Res.">
        <title>Complete genome sequence of Yersinia pestis strain 91001, an isolate avirulent to humans.</title>
        <authorList>
            <person name="Song Y."/>
            <person name="Tong Z."/>
            <person name="Wang J."/>
            <person name="Wang L."/>
            <person name="Guo Z."/>
            <person name="Han Y."/>
            <person name="Zhang J."/>
            <person name="Pei D."/>
            <person name="Zhou D."/>
            <person name="Qin H."/>
            <person name="Pang X."/>
            <person name="Han Y."/>
            <person name="Zhai J."/>
            <person name="Li M."/>
            <person name="Cui B."/>
            <person name="Qi Z."/>
            <person name="Jin L."/>
            <person name="Dai R."/>
            <person name="Chen F."/>
            <person name="Li S."/>
            <person name="Ye C."/>
            <person name="Du Z."/>
            <person name="Lin W."/>
            <person name="Wang J."/>
            <person name="Yu J."/>
            <person name="Yang H."/>
            <person name="Wang J."/>
            <person name="Huang P."/>
            <person name="Yang R."/>
        </authorList>
    </citation>
    <scope>NUCLEOTIDE SEQUENCE [LARGE SCALE GENOMIC DNA]</scope>
    <source>
        <strain>91001 / Biovar Mediaevalis</strain>
    </source>
</reference>
<feature type="signal peptide" evidence="1">
    <location>
        <begin position="1"/>
        <end position="20"/>
    </location>
</feature>
<feature type="chain" id="PRO_0000045379" description="Outer membrane protein assembly factor BamA">
    <location>
        <begin position="21"/>
        <end position="795"/>
    </location>
</feature>
<feature type="domain" description="POTRA 1" evidence="2">
    <location>
        <begin position="24"/>
        <end position="91"/>
    </location>
</feature>
<feature type="domain" description="POTRA 2" evidence="2">
    <location>
        <begin position="92"/>
        <end position="172"/>
    </location>
</feature>
<feature type="domain" description="POTRA 3" evidence="2">
    <location>
        <begin position="175"/>
        <end position="263"/>
    </location>
</feature>
<feature type="domain" description="POTRA 4" evidence="2">
    <location>
        <begin position="266"/>
        <end position="344"/>
    </location>
</feature>
<feature type="domain" description="POTRA 5" evidence="2">
    <location>
        <begin position="347"/>
        <end position="421"/>
    </location>
</feature>
<proteinExistence type="inferred from homology"/>
<sequence length="795" mass="87838">MAMKKLLIASLLFGSATVYGADGFVVNDIHFEGLQRVAVGAALLNMPVRVGDTVSDDDIGKTIRALFATGNFEDVRVLRDGNTLIVQVKERPTIASITFSGNKAVKEDMLKQNLEASGVRVGEALDRTTISNIEKGLEDFYYSVGKYSASVKAVVTPLPRNRVDLKLVFTEGVSAKIQQINIVGNHSFTTDELISRFQLRDEVPWWNVVGDRKYQKQKLAGDLETLRSFYLDRGYARFNIDSTQVSLTPDKKGIYVTINITEGPQFKLNSVIVSGNLAGHQSEAEKLTKIEPGELFNGSKVTRMEDDIKKMLGRYGYAYPRVVTQPEINDDDKTVKLHINVDAGNRFYVRHIRFEGNDTSKDSVLRREMRQMEGAWLGNDQVEAGKERLNRLGYFETVDVETQRVPGAADLVDVTYKVKERNTGSLNFGIGYGTESGVSFQVGVQQDNWLGTGNTVGINGTKNDYQTYAEFTLMDPYFTVDGVSLGGRIFYNDFKADNADLSGYTNSSYGADGTLGFPINENNSLRVGVGYVHNDLSDMLPQVAMWRYLESVGERPGYDGREGFTTDDFTLNLGWTYNNLDRGFFPTSGVKSSVNTKITVPGSDNEFYKVTFDTSAYQPLNEDRSWVLLGRGRLGYGDGIGSKEMPFYENFYAGGSSTVRGFRSNNIGPKAAYYANGGATVTNSTDAVGGNAMAVASIELITPTPFISEKYSNSVRTSIFIDSGTVWDTNWENTAKTRAAGIPDYGKASNIRVSAGVALQWMSPLGPLVFSYAKPVKDYEGDKSEQFQFNIGKTW</sequence>
<comment type="function">
    <text evidence="1">Part of the outer membrane protein assembly complex, which is involved in assembly and insertion of beta-barrel proteins into the outer membrane. Constitutes, with BamD, the core component of the assembly machinery.</text>
</comment>
<comment type="subunit">
    <text evidence="1">Part of the Bam complex, which is composed of the outer membrane protein BamA, and four lipoproteins BamB, BamC, BamD and BamE.</text>
</comment>
<comment type="subcellular location">
    <subcellularLocation>
        <location evidence="1">Cell outer membrane</location>
    </subcellularLocation>
</comment>
<comment type="similarity">
    <text evidence="1">Belongs to the BamA family.</text>
</comment>
<gene>
    <name evidence="1" type="primary">bamA</name>
    <name type="synonym">yaeT</name>
    <name type="ordered locus">YPO1052</name>
    <name type="ordered locus">y3127</name>
    <name type="ordered locus">YP_2798</name>
</gene>
<organism>
    <name type="scientific">Yersinia pestis</name>
    <dbReference type="NCBI Taxonomy" id="632"/>
    <lineage>
        <taxon>Bacteria</taxon>
        <taxon>Pseudomonadati</taxon>
        <taxon>Pseudomonadota</taxon>
        <taxon>Gammaproteobacteria</taxon>
        <taxon>Enterobacterales</taxon>
        <taxon>Yersiniaceae</taxon>
        <taxon>Yersinia</taxon>
    </lineage>
</organism>